<protein>
    <recommendedName>
        <fullName>Conotoxin ArMSGL-0143</fullName>
    </recommendedName>
</protein>
<reference key="1">
    <citation type="journal article" date="2001" name="Mol. Biol. Evol.">
        <title>Mechanisms for evolving hypervariability: the case of conopeptides.</title>
        <authorList>
            <person name="Conticello S.G."/>
            <person name="Gilad Y."/>
            <person name="Avidan N."/>
            <person name="Ben-Asher E."/>
            <person name="Levy Z."/>
            <person name="Fainzilber M."/>
        </authorList>
    </citation>
    <scope>NUCLEOTIDE SEQUENCE [MRNA]</scope>
    <source>
        <tissue>Venom duct</tissue>
    </source>
</reference>
<dbReference type="EMBL" id="AF215073">
    <property type="protein sequence ID" value="AAG60501.1"/>
    <property type="molecule type" value="mRNA"/>
</dbReference>
<dbReference type="ConoServer" id="760">
    <property type="toxin name" value="Ar6.26 precursor"/>
</dbReference>
<dbReference type="GO" id="GO:0005576">
    <property type="term" value="C:extracellular region"/>
    <property type="evidence" value="ECO:0007669"/>
    <property type="project" value="UniProtKB-SubCell"/>
</dbReference>
<dbReference type="GO" id="GO:0008200">
    <property type="term" value="F:ion channel inhibitor activity"/>
    <property type="evidence" value="ECO:0007669"/>
    <property type="project" value="InterPro"/>
</dbReference>
<dbReference type="GO" id="GO:0090729">
    <property type="term" value="F:toxin activity"/>
    <property type="evidence" value="ECO:0007669"/>
    <property type="project" value="UniProtKB-KW"/>
</dbReference>
<dbReference type="InterPro" id="IPR004214">
    <property type="entry name" value="Conotoxin"/>
</dbReference>
<dbReference type="Pfam" id="PF02950">
    <property type="entry name" value="Conotoxin"/>
    <property type="match status" value="1"/>
</dbReference>
<feature type="signal peptide" evidence="2">
    <location>
        <begin position="1"/>
        <end position="22"/>
    </location>
</feature>
<feature type="propeptide" id="PRO_0000404856" evidence="1">
    <location>
        <begin position="23"/>
        <end position="44"/>
    </location>
</feature>
<feature type="peptide" id="PRO_0000404857" description="Conotoxin ArMSGL-0143">
    <location>
        <begin position="47"/>
        <end position="76"/>
    </location>
</feature>
<feature type="modified residue" description="Phenylalanine amide" evidence="1">
    <location>
        <position position="76"/>
    </location>
</feature>
<feature type="disulfide bond" evidence="1">
    <location>
        <begin position="51"/>
        <end position="63"/>
    </location>
</feature>
<feature type="disulfide bond" evidence="1">
    <location>
        <begin position="55"/>
        <end position="71"/>
    </location>
</feature>
<feature type="disulfide bond" evidence="1">
    <location>
        <begin position="62"/>
        <end position="75"/>
    </location>
</feature>
<sequence length="77" mass="8701">MSGLGIMLLTLLLLVFMETSHQDAGEKQATQRDAINVRRRRSLTRRVTEECEENCEEEEKHCCNTNNGPSCAPQCFG</sequence>
<comment type="subcellular location">
    <subcellularLocation>
        <location evidence="1">Secreted</location>
    </subcellularLocation>
</comment>
<comment type="tissue specificity">
    <text>Expressed by the venom duct.</text>
</comment>
<comment type="domain">
    <text evidence="1">The presence of a 'disulfide through disulfide knot' structurally defines this protein as a knottin.</text>
</comment>
<comment type="domain">
    <text>The cysteine framework is VI/VII (C-C-CC-C-C).</text>
</comment>
<comment type="similarity">
    <text evidence="3">Belongs to the conotoxin O3 superfamily.</text>
</comment>
<evidence type="ECO:0000250" key="1"/>
<evidence type="ECO:0000255" key="2"/>
<evidence type="ECO:0000305" key="3"/>
<accession>Q9BP65</accession>
<organism>
    <name type="scientific">Conus arenatus</name>
    <name type="common">Sand-dusted cone</name>
    <dbReference type="NCBI Taxonomy" id="89451"/>
    <lineage>
        <taxon>Eukaryota</taxon>
        <taxon>Metazoa</taxon>
        <taxon>Spiralia</taxon>
        <taxon>Lophotrochozoa</taxon>
        <taxon>Mollusca</taxon>
        <taxon>Gastropoda</taxon>
        <taxon>Caenogastropoda</taxon>
        <taxon>Neogastropoda</taxon>
        <taxon>Conoidea</taxon>
        <taxon>Conidae</taxon>
        <taxon>Conus</taxon>
    </lineage>
</organism>
<name>O3626_CONAE</name>
<proteinExistence type="evidence at transcript level"/>
<keyword id="KW-0027">Amidation</keyword>
<keyword id="KW-0165">Cleavage on pair of basic residues</keyword>
<keyword id="KW-1015">Disulfide bond</keyword>
<keyword id="KW-0960">Knottin</keyword>
<keyword id="KW-0528">Neurotoxin</keyword>
<keyword id="KW-0964">Secreted</keyword>
<keyword id="KW-0732">Signal</keyword>
<keyword id="KW-0800">Toxin</keyword>